<organism>
    <name type="scientific">Pseudomonas putida (strain DOT-T1E)</name>
    <dbReference type="NCBI Taxonomy" id="1196325"/>
    <lineage>
        <taxon>Bacteria</taxon>
        <taxon>Pseudomonadati</taxon>
        <taxon>Pseudomonadota</taxon>
        <taxon>Gammaproteobacteria</taxon>
        <taxon>Pseudomonadales</taxon>
        <taxon>Pseudomonadaceae</taxon>
        <taxon>Pseudomonas</taxon>
    </lineage>
</organism>
<accession>Q93PU6</accession>
<reference key="1">
    <citation type="journal article" date="2001" name="J. Bacteriol.">
        <title>Three efflux pumps are required to provide efficient tolerance to toluene in Pseudomonas putida DOT-T1E.</title>
        <authorList>
            <person name="Rojas A."/>
            <person name="Duque E."/>
            <person name="Mosqueda G."/>
            <person name="Golden G."/>
            <person name="Hurtado A."/>
            <person name="Ramos J.L."/>
            <person name="Segura A."/>
        </authorList>
    </citation>
    <scope>NUCLEOTIDE SEQUENCE [GENOMIC DNA]</scope>
    <source>
        <strain>DOT-T1E</strain>
    </source>
</reference>
<reference key="2">
    <citation type="journal article" date="2011" name="Environ. Microbiol.">
        <title>The pGRT1 plasmid of Pseudomonas putida DOT-T1E encodes functions relevant for survival under harsh conditions in the environment.</title>
        <authorList>
            <person name="Molina L."/>
            <person name="Duque E."/>
            <person name="Gomez M.J."/>
            <person name="Krell T."/>
            <person name="Lacal J."/>
            <person name="Garcia-Puente A."/>
            <person name="Garcia V."/>
            <person name="Matilla M.A."/>
            <person name="Ramos J.L."/>
            <person name="Segura A."/>
        </authorList>
    </citation>
    <scope>NUCLEOTIDE SEQUENCE [LARGE SCALE GENOMIC DNA]</scope>
    <source>
        <strain>DOT-T1E</strain>
    </source>
</reference>
<reference key="3">
    <citation type="journal article" date="2013" name="Microb. Biotechnol.">
        <title>Metabolic potential of the organic-solvent tolerant Pseudomonas putida DOT-T1E deduced from its annotated genome.</title>
        <authorList>
            <person name="Udaondo Z."/>
            <person name="Molina L."/>
            <person name="Daniels C."/>
            <person name="Gomez M.J."/>
            <person name="Molina-Henares M.A."/>
            <person name="Matilla M.A."/>
            <person name="Roca A."/>
            <person name="Fernandez M."/>
            <person name="Duque E."/>
            <person name="Segura A."/>
            <person name="Ramos J.L."/>
        </authorList>
    </citation>
    <scope>NUCLEOTIDE SEQUENCE [LARGE SCALE GENOMIC DNA]</scope>
    <source>
        <strain>DOT-T1E</strain>
    </source>
</reference>
<reference key="4">
    <citation type="journal article" date="2003" name="J. Bacteriol.">
        <title>In vivo and in vitro evidence that TtgV is the specific regulator of the TtgGHI multidrug and solvent efflux pump of Pseudomonas putida.</title>
        <authorList>
            <person name="Rojas A."/>
            <person name="Segura A."/>
            <person name="Guazzaroni M.E."/>
            <person name="Teran W."/>
            <person name="Hurtado A."/>
            <person name="Gallegos M.T."/>
            <person name="Ramos J.L."/>
        </authorList>
    </citation>
    <scope>OPERON ORGANIZATION</scope>
    <scope>INDUCTION</scope>
    <scope>CHARACTERIZATION</scope>
    <source>
        <strain>DOT-T1E</strain>
    </source>
</reference>
<reference key="5">
    <citation type="journal article" date="2004" name="J. Bacteriol.">
        <title>TtgV bound to a complex operator site represses transcription of the promoter for the multidrug and solvent extrusion TtgGHI pump.</title>
        <authorList>
            <person name="Guazzaroni M.E."/>
            <person name="Teran W."/>
            <person name="Zhang X."/>
            <person name="Gallegos M.T."/>
            <person name="Ramos J.L."/>
        </authorList>
    </citation>
    <scope>CHARACTERIZATION</scope>
    <source>
        <strain>DOT-T1E</strain>
    </source>
</reference>
<protein>
    <recommendedName>
        <fullName>HTH-type transcriptional regulator TtgV</fullName>
    </recommendedName>
    <alternativeName>
        <fullName>Toluene tolerance pump ttgGHI operon repressor</fullName>
    </alternativeName>
</protein>
<keyword id="KW-0002">3D-structure</keyword>
<keyword id="KW-0238">DNA-binding</keyword>
<keyword id="KW-0614">Plasmid</keyword>
<keyword id="KW-0678">Repressor</keyword>
<keyword id="KW-0804">Transcription</keyword>
<keyword id="KW-0805">Transcription regulation</keyword>
<sequence length="259" mass="27411">MNQSDENIGKAGGIQVIARAASIMRALGSHPHGLSLAAIAQLVGLPRSTVQRIINALEEEFLVEALGPAGGFRLGPALGQLINQAQTDILSLVKPYLRSLAEELDESVCLASLAGDKIYVLDRIVSERELRVVFPIGINVPAAATAAGKVLLAALPDETLQAALGEQLPVLTSNTLGRKALVKQLSEVRQSGVASDLDEHIDGVCSFATLLDTYLGYYSLAIVMPSSRASKQSDLIKKALLQSKLNIERAIGRASKKAP</sequence>
<evidence type="ECO:0000255" key="1">
    <source>
        <dbReference type="PROSITE-ProRule" id="PRU00393"/>
    </source>
</evidence>
<evidence type="ECO:0000255" key="2">
    <source>
        <dbReference type="PROSITE-ProRule" id="PRU00394"/>
    </source>
</evidence>
<evidence type="ECO:0000269" key="3">
    <source>
    </source>
</evidence>
<evidence type="ECO:0007829" key="4">
    <source>
        <dbReference type="PDB" id="2XRN"/>
    </source>
</evidence>
<gene>
    <name type="primary">ttgV</name>
</gene>
<name>TTGV_PSEPT</name>
<geneLocation type="plasmid">
    <name>pGRT1</name>
</geneLocation>
<feature type="chain" id="PRO_0000201767" description="HTH-type transcriptional regulator TtgV">
    <location>
        <begin position="1"/>
        <end position="259"/>
    </location>
</feature>
<feature type="domain" description="HTH iclR-type" evidence="1">
    <location>
        <begin position="14"/>
        <end position="76"/>
    </location>
</feature>
<feature type="domain" description="IclR-ED" evidence="2">
    <location>
        <begin position="89"/>
        <end position="253"/>
    </location>
</feature>
<feature type="DNA-binding region" description="H-T-H motif" evidence="1">
    <location>
        <begin position="36"/>
        <end position="59"/>
    </location>
</feature>
<feature type="helix" evidence="4">
    <location>
        <begin position="16"/>
        <end position="28"/>
    </location>
</feature>
<feature type="helix" evidence="4">
    <location>
        <begin position="36"/>
        <end position="42"/>
    </location>
</feature>
<feature type="helix" evidence="4">
    <location>
        <begin position="47"/>
        <end position="58"/>
    </location>
</feature>
<feature type="turn" evidence="4">
    <location>
        <begin position="59"/>
        <end position="61"/>
    </location>
</feature>
<feature type="strand" evidence="4">
    <location>
        <begin position="62"/>
        <end position="65"/>
    </location>
</feature>
<feature type="helix" evidence="4">
    <location>
        <begin position="67"/>
        <end position="69"/>
    </location>
</feature>
<feature type="strand" evidence="4">
    <location>
        <begin position="71"/>
        <end position="74"/>
    </location>
</feature>
<feature type="helix" evidence="4">
    <location>
        <begin position="77"/>
        <end position="104"/>
    </location>
</feature>
<feature type="strand" evidence="4">
    <location>
        <begin position="106"/>
        <end position="114"/>
    </location>
</feature>
<feature type="strand" evidence="4">
    <location>
        <begin position="117"/>
        <end position="124"/>
    </location>
</feature>
<feature type="strand" evidence="4">
    <location>
        <begin position="128"/>
        <end position="130"/>
    </location>
</feature>
<feature type="strand" evidence="4">
    <location>
        <begin position="139"/>
        <end position="141"/>
    </location>
</feature>
<feature type="helix" evidence="4">
    <location>
        <begin position="142"/>
        <end position="144"/>
    </location>
</feature>
<feature type="helix" evidence="4">
    <location>
        <begin position="146"/>
        <end position="154"/>
    </location>
</feature>
<feature type="helix" evidence="4">
    <location>
        <begin position="157"/>
        <end position="163"/>
    </location>
</feature>
<feature type="strand" evidence="4">
    <location>
        <begin position="172"/>
        <end position="174"/>
    </location>
</feature>
<feature type="helix" evidence="4">
    <location>
        <begin position="178"/>
        <end position="191"/>
    </location>
</feature>
<feature type="strand" evidence="4">
    <location>
        <begin position="193"/>
        <end position="201"/>
    </location>
</feature>
<feature type="strand" evidence="4">
    <location>
        <begin position="204"/>
        <end position="213"/>
    </location>
</feature>
<feature type="strand" evidence="4">
    <location>
        <begin position="216"/>
        <end position="225"/>
    </location>
</feature>
<feature type="helix" evidence="4">
    <location>
        <begin position="226"/>
        <end position="251"/>
    </location>
</feature>
<dbReference type="EMBL" id="HM626202">
    <property type="protein sequence ID" value="AAK69562.1"/>
    <property type="molecule type" value="Genomic_DNA"/>
</dbReference>
<dbReference type="RefSeq" id="WP_014003968.1">
    <property type="nucleotide sequence ID" value="NC_015855.1"/>
</dbReference>
<dbReference type="RefSeq" id="YP_004750622.1">
    <property type="nucleotide sequence ID" value="NC_015855.1"/>
</dbReference>
<dbReference type="PDB" id="2XRN">
    <property type="method" value="X-ray"/>
    <property type="resolution" value="2.90 A"/>
    <property type="chains" value="A/B=14-253"/>
</dbReference>
<dbReference type="PDB" id="2XRO">
    <property type="method" value="X-ray"/>
    <property type="resolution" value="3.40 A"/>
    <property type="chains" value="A/B/E/F=14-253"/>
</dbReference>
<dbReference type="PDBsum" id="2XRN"/>
<dbReference type="PDBsum" id="2XRO"/>
<dbReference type="SMR" id="Q93PU6"/>
<dbReference type="EvolutionaryTrace" id="Q93PU6"/>
<dbReference type="Proteomes" id="UP000006503">
    <property type="component" value="Plasmid pGRT1"/>
</dbReference>
<dbReference type="GO" id="GO:0003677">
    <property type="term" value="F:DNA binding"/>
    <property type="evidence" value="ECO:0007669"/>
    <property type="project" value="UniProtKB-KW"/>
</dbReference>
<dbReference type="GO" id="GO:0003700">
    <property type="term" value="F:DNA-binding transcription factor activity"/>
    <property type="evidence" value="ECO:0007669"/>
    <property type="project" value="TreeGrafter"/>
</dbReference>
<dbReference type="GO" id="GO:0045892">
    <property type="term" value="P:negative regulation of DNA-templated transcription"/>
    <property type="evidence" value="ECO:0007669"/>
    <property type="project" value="TreeGrafter"/>
</dbReference>
<dbReference type="Gene3D" id="3.30.450.40">
    <property type="match status" value="1"/>
</dbReference>
<dbReference type="Gene3D" id="1.10.10.10">
    <property type="entry name" value="Winged helix-like DNA-binding domain superfamily/Winged helix DNA-binding domain"/>
    <property type="match status" value="1"/>
</dbReference>
<dbReference type="InterPro" id="IPR029016">
    <property type="entry name" value="GAF-like_dom_sf"/>
</dbReference>
<dbReference type="InterPro" id="IPR050707">
    <property type="entry name" value="HTH_MetabolicPath_Reg"/>
</dbReference>
<dbReference type="InterPro" id="IPR014757">
    <property type="entry name" value="Tscrpt_reg_IclR_C"/>
</dbReference>
<dbReference type="InterPro" id="IPR005471">
    <property type="entry name" value="Tscrpt_reg_IclR_N"/>
</dbReference>
<dbReference type="InterPro" id="IPR036388">
    <property type="entry name" value="WH-like_DNA-bd_sf"/>
</dbReference>
<dbReference type="InterPro" id="IPR036390">
    <property type="entry name" value="WH_DNA-bd_sf"/>
</dbReference>
<dbReference type="PANTHER" id="PTHR30136">
    <property type="entry name" value="HELIX-TURN-HELIX TRANSCRIPTIONAL REGULATOR, ICLR FAMILY"/>
    <property type="match status" value="1"/>
</dbReference>
<dbReference type="PANTHER" id="PTHR30136:SF35">
    <property type="entry name" value="HTH-TYPE TRANSCRIPTIONAL REGULATOR RV1719"/>
    <property type="match status" value="1"/>
</dbReference>
<dbReference type="Pfam" id="PF09339">
    <property type="entry name" value="HTH_IclR"/>
    <property type="match status" value="1"/>
</dbReference>
<dbReference type="Pfam" id="PF01614">
    <property type="entry name" value="IclR_C"/>
    <property type="match status" value="1"/>
</dbReference>
<dbReference type="SMART" id="SM00346">
    <property type="entry name" value="HTH_ICLR"/>
    <property type="match status" value="1"/>
</dbReference>
<dbReference type="SUPFAM" id="SSF55781">
    <property type="entry name" value="GAF domain-like"/>
    <property type="match status" value="1"/>
</dbReference>
<dbReference type="SUPFAM" id="SSF46785">
    <property type="entry name" value="Winged helix' DNA-binding domain"/>
    <property type="match status" value="1"/>
</dbReference>
<dbReference type="PROSITE" id="PS51077">
    <property type="entry name" value="HTH_ICLR"/>
    <property type="match status" value="1"/>
</dbReference>
<dbReference type="PROSITE" id="PS51078">
    <property type="entry name" value="ICLR_ED"/>
    <property type="match status" value="1"/>
</dbReference>
<proteinExistence type="evidence at protein level"/>
<comment type="function">
    <text>Represses the expression of the ttgGHI and ttgVW operons. Binds to the ttgGHI / ttgVW intergenic region, probably preventing binding of RNA polymerase; ttgV dissociates from this region in the presence of 1-hexanol.</text>
</comment>
<comment type="induction">
    <text evidence="3">The ttgVW operon is induced by toluene and styrene, but not by the antibiotics carbenicillin, chloramphenicol, nalidixic acid, tetracycline or gentamicin.</text>
</comment>